<reference key="1">
    <citation type="submission" date="2009-01" db="EMBL/GenBank/DDBJ databases">
        <title>Complete sequence of Desulfovibrio desulfuricans subsp. desulfuricans str. ATCC 27774.</title>
        <authorList>
            <consortium name="US DOE Joint Genome Institute"/>
            <person name="Lucas S."/>
            <person name="Copeland A."/>
            <person name="Lapidus A."/>
            <person name="Glavina del Rio T."/>
            <person name="Tice H."/>
            <person name="Bruce D."/>
            <person name="Goodwin L."/>
            <person name="Pitluck S."/>
            <person name="Sims D."/>
            <person name="Lu M."/>
            <person name="Kiss H."/>
            <person name="Meineke L."/>
            <person name="Brettin T."/>
            <person name="Detter J.C."/>
            <person name="Han C."/>
            <person name="Larimer F."/>
            <person name="Land M."/>
            <person name="Hauser L."/>
            <person name="Kyrpides N."/>
            <person name="Ovchinnikova G."/>
            <person name="Hazen T.C."/>
        </authorList>
    </citation>
    <scope>NUCLEOTIDE SEQUENCE [LARGE SCALE GENOMIC DNA]</scope>
    <source>
        <strain>ATCC 27774 / DSM 6949 / MB</strain>
    </source>
</reference>
<feature type="chain" id="PRO_1000148916" description="Imidazole glycerol phosphate synthase subunit HisF">
    <location>
        <begin position="1"/>
        <end position="259"/>
    </location>
</feature>
<feature type="active site" evidence="1">
    <location>
        <position position="11"/>
    </location>
</feature>
<feature type="active site" evidence="1">
    <location>
        <position position="130"/>
    </location>
</feature>
<sequence length="259" mass="27386">MLSKRVIPCLDVRNGRLTKGVKFVGNEDIGDPVESARRYYEEGADEIVFYDITASAEARGIFLDVVERVAEQIFIPFSVGGGISSVADMRAVLLAGAEKVSINSAAVKNPRLIGDGADAFGSQAVVVGMDVLAVPESPEIPSGYEIVIHGGRKRMGLDAIAWARCCQELGAGELCVNSIDADGTKDGYELKLTRAIADAVSLPVIASGGAGEPRHMLEAVTGGGASAALIASIVHYGQYSIRQCKEYMAAHGARMRLTW</sequence>
<proteinExistence type="inferred from homology"/>
<gene>
    <name evidence="1" type="primary">hisF</name>
    <name type="ordered locus">Ddes_0091</name>
</gene>
<evidence type="ECO:0000255" key="1">
    <source>
        <dbReference type="HAMAP-Rule" id="MF_01013"/>
    </source>
</evidence>
<comment type="function">
    <text evidence="1">IGPS catalyzes the conversion of PRFAR and glutamine to IGP, AICAR and glutamate. The HisF subunit catalyzes the cyclization activity that produces IGP and AICAR from PRFAR using the ammonia provided by the HisH subunit.</text>
</comment>
<comment type="catalytic activity">
    <reaction evidence="1">
        <text>5-[(5-phospho-1-deoxy-D-ribulos-1-ylimino)methylamino]-1-(5-phospho-beta-D-ribosyl)imidazole-4-carboxamide + L-glutamine = D-erythro-1-(imidazol-4-yl)glycerol 3-phosphate + 5-amino-1-(5-phospho-beta-D-ribosyl)imidazole-4-carboxamide + L-glutamate + H(+)</text>
        <dbReference type="Rhea" id="RHEA:24793"/>
        <dbReference type="ChEBI" id="CHEBI:15378"/>
        <dbReference type="ChEBI" id="CHEBI:29985"/>
        <dbReference type="ChEBI" id="CHEBI:58278"/>
        <dbReference type="ChEBI" id="CHEBI:58359"/>
        <dbReference type="ChEBI" id="CHEBI:58475"/>
        <dbReference type="ChEBI" id="CHEBI:58525"/>
        <dbReference type="EC" id="4.3.2.10"/>
    </reaction>
</comment>
<comment type="pathway">
    <text evidence="1">Amino-acid biosynthesis; L-histidine biosynthesis; L-histidine from 5-phospho-alpha-D-ribose 1-diphosphate: step 5/9.</text>
</comment>
<comment type="subunit">
    <text evidence="1">Heterodimer of HisH and HisF.</text>
</comment>
<comment type="subcellular location">
    <subcellularLocation>
        <location evidence="1">Cytoplasm</location>
    </subcellularLocation>
</comment>
<comment type="similarity">
    <text evidence="1">Belongs to the HisA/HisF family.</text>
</comment>
<keyword id="KW-0028">Amino-acid biosynthesis</keyword>
<keyword id="KW-0963">Cytoplasm</keyword>
<keyword id="KW-0368">Histidine biosynthesis</keyword>
<keyword id="KW-0456">Lyase</keyword>
<name>HIS6_DESDA</name>
<protein>
    <recommendedName>
        <fullName evidence="1">Imidazole glycerol phosphate synthase subunit HisF</fullName>
        <ecNumber evidence="1">4.3.2.10</ecNumber>
    </recommendedName>
    <alternativeName>
        <fullName evidence="1">IGP synthase cyclase subunit</fullName>
    </alternativeName>
    <alternativeName>
        <fullName evidence="1">IGP synthase subunit HisF</fullName>
    </alternativeName>
    <alternativeName>
        <fullName evidence="1">ImGP synthase subunit HisF</fullName>
        <shortName evidence="1">IGPS subunit HisF</shortName>
    </alternativeName>
</protein>
<accession>B8J216</accession>
<organism>
    <name type="scientific">Desulfovibrio desulfuricans (strain ATCC 27774 / DSM 6949 / MB)</name>
    <dbReference type="NCBI Taxonomy" id="525146"/>
    <lineage>
        <taxon>Bacteria</taxon>
        <taxon>Pseudomonadati</taxon>
        <taxon>Thermodesulfobacteriota</taxon>
        <taxon>Desulfovibrionia</taxon>
        <taxon>Desulfovibrionales</taxon>
        <taxon>Desulfovibrionaceae</taxon>
        <taxon>Desulfovibrio</taxon>
    </lineage>
</organism>
<dbReference type="EC" id="4.3.2.10" evidence="1"/>
<dbReference type="EMBL" id="CP001358">
    <property type="protein sequence ID" value="ACL48011.1"/>
    <property type="molecule type" value="Genomic_DNA"/>
</dbReference>
<dbReference type="SMR" id="B8J216"/>
<dbReference type="STRING" id="525146.Ddes_0091"/>
<dbReference type="KEGG" id="dds:Ddes_0091"/>
<dbReference type="eggNOG" id="COG0107">
    <property type="taxonomic scope" value="Bacteria"/>
</dbReference>
<dbReference type="HOGENOM" id="CLU_048577_4_0_7"/>
<dbReference type="UniPathway" id="UPA00031">
    <property type="reaction ID" value="UER00010"/>
</dbReference>
<dbReference type="GO" id="GO:0005737">
    <property type="term" value="C:cytoplasm"/>
    <property type="evidence" value="ECO:0007669"/>
    <property type="project" value="UniProtKB-SubCell"/>
</dbReference>
<dbReference type="GO" id="GO:0000107">
    <property type="term" value="F:imidazoleglycerol-phosphate synthase activity"/>
    <property type="evidence" value="ECO:0007669"/>
    <property type="project" value="UniProtKB-UniRule"/>
</dbReference>
<dbReference type="GO" id="GO:0016829">
    <property type="term" value="F:lyase activity"/>
    <property type="evidence" value="ECO:0007669"/>
    <property type="project" value="UniProtKB-KW"/>
</dbReference>
<dbReference type="GO" id="GO:0000105">
    <property type="term" value="P:L-histidine biosynthetic process"/>
    <property type="evidence" value="ECO:0007669"/>
    <property type="project" value="UniProtKB-UniRule"/>
</dbReference>
<dbReference type="CDD" id="cd04731">
    <property type="entry name" value="HisF"/>
    <property type="match status" value="1"/>
</dbReference>
<dbReference type="Gene3D" id="3.20.20.70">
    <property type="entry name" value="Aldolase class I"/>
    <property type="match status" value="1"/>
</dbReference>
<dbReference type="HAMAP" id="MF_01013">
    <property type="entry name" value="HisF"/>
    <property type="match status" value="1"/>
</dbReference>
<dbReference type="InterPro" id="IPR013785">
    <property type="entry name" value="Aldolase_TIM"/>
</dbReference>
<dbReference type="InterPro" id="IPR006062">
    <property type="entry name" value="His_biosynth"/>
</dbReference>
<dbReference type="InterPro" id="IPR004651">
    <property type="entry name" value="HisF"/>
</dbReference>
<dbReference type="InterPro" id="IPR050064">
    <property type="entry name" value="IGPS_HisA/HisF"/>
</dbReference>
<dbReference type="InterPro" id="IPR011060">
    <property type="entry name" value="RibuloseP-bd_barrel"/>
</dbReference>
<dbReference type="NCBIfam" id="TIGR00735">
    <property type="entry name" value="hisF"/>
    <property type="match status" value="1"/>
</dbReference>
<dbReference type="PANTHER" id="PTHR21235:SF2">
    <property type="entry name" value="IMIDAZOLE GLYCEROL PHOSPHATE SYNTHASE HISHF"/>
    <property type="match status" value="1"/>
</dbReference>
<dbReference type="PANTHER" id="PTHR21235">
    <property type="entry name" value="IMIDAZOLE GLYCEROL PHOSPHATE SYNTHASE SUBUNIT HISF/H IGP SYNTHASE SUBUNIT HISF/H"/>
    <property type="match status" value="1"/>
</dbReference>
<dbReference type="Pfam" id="PF00977">
    <property type="entry name" value="His_biosynth"/>
    <property type="match status" value="1"/>
</dbReference>
<dbReference type="SUPFAM" id="SSF51366">
    <property type="entry name" value="Ribulose-phoshate binding barrel"/>
    <property type="match status" value="1"/>
</dbReference>